<organism>
    <name type="scientific">Pseudomonas syringae pv. tomato (strain ATCC BAA-871 / DC3000)</name>
    <dbReference type="NCBI Taxonomy" id="223283"/>
    <lineage>
        <taxon>Bacteria</taxon>
        <taxon>Pseudomonadati</taxon>
        <taxon>Pseudomonadota</taxon>
        <taxon>Gammaproteobacteria</taxon>
        <taxon>Pseudomonadales</taxon>
        <taxon>Pseudomonadaceae</taxon>
        <taxon>Pseudomonas</taxon>
    </lineage>
</organism>
<dbReference type="EC" id="2.7.1.35" evidence="1"/>
<dbReference type="EMBL" id="AE016853">
    <property type="protein sequence ID" value="AAO58940.1"/>
    <property type="molecule type" value="Genomic_DNA"/>
</dbReference>
<dbReference type="RefSeq" id="NP_795245.1">
    <property type="nucleotide sequence ID" value="NC_004578.1"/>
</dbReference>
<dbReference type="RefSeq" id="WP_005768313.1">
    <property type="nucleotide sequence ID" value="NC_004578.1"/>
</dbReference>
<dbReference type="SMR" id="Q87TZ6"/>
<dbReference type="STRING" id="223283.PSPTO_5521"/>
<dbReference type="GeneID" id="1187213"/>
<dbReference type="KEGG" id="pst:PSPTO_5521"/>
<dbReference type="PATRIC" id="fig|223283.9.peg.5657"/>
<dbReference type="eggNOG" id="COG2240">
    <property type="taxonomic scope" value="Bacteria"/>
</dbReference>
<dbReference type="HOGENOM" id="CLU_046496_3_0_6"/>
<dbReference type="OrthoDB" id="9800808at2"/>
<dbReference type="PhylomeDB" id="Q87TZ6"/>
<dbReference type="UniPathway" id="UPA01068">
    <property type="reaction ID" value="UER00298"/>
</dbReference>
<dbReference type="Proteomes" id="UP000002515">
    <property type="component" value="Chromosome"/>
</dbReference>
<dbReference type="GO" id="GO:0005829">
    <property type="term" value="C:cytosol"/>
    <property type="evidence" value="ECO:0007669"/>
    <property type="project" value="TreeGrafter"/>
</dbReference>
<dbReference type="GO" id="GO:0005524">
    <property type="term" value="F:ATP binding"/>
    <property type="evidence" value="ECO:0007669"/>
    <property type="project" value="UniProtKB-UniRule"/>
</dbReference>
<dbReference type="GO" id="GO:0000287">
    <property type="term" value="F:magnesium ion binding"/>
    <property type="evidence" value="ECO:0007669"/>
    <property type="project" value="UniProtKB-UniRule"/>
</dbReference>
<dbReference type="GO" id="GO:0008478">
    <property type="term" value="F:pyridoxal kinase activity"/>
    <property type="evidence" value="ECO:0007669"/>
    <property type="project" value="UniProtKB-UniRule"/>
</dbReference>
<dbReference type="GO" id="GO:0009443">
    <property type="term" value="P:pyridoxal 5'-phosphate salvage"/>
    <property type="evidence" value="ECO:0007669"/>
    <property type="project" value="UniProtKB-UniRule"/>
</dbReference>
<dbReference type="CDD" id="cd01173">
    <property type="entry name" value="pyridoxal_pyridoxamine_kinase"/>
    <property type="match status" value="1"/>
</dbReference>
<dbReference type="FunFam" id="3.40.1190.20:FF:000008">
    <property type="entry name" value="Pyridoxal kinase PdxY"/>
    <property type="match status" value="1"/>
</dbReference>
<dbReference type="Gene3D" id="3.40.1190.20">
    <property type="match status" value="1"/>
</dbReference>
<dbReference type="HAMAP" id="MF_01639">
    <property type="entry name" value="PdxY"/>
    <property type="match status" value="1"/>
</dbReference>
<dbReference type="InterPro" id="IPR013749">
    <property type="entry name" value="PM/HMP-P_kinase-1"/>
</dbReference>
<dbReference type="InterPro" id="IPR004625">
    <property type="entry name" value="PyrdxlKinase"/>
</dbReference>
<dbReference type="InterPro" id="IPR023685">
    <property type="entry name" value="Pyridoxal_kinase_PdxY"/>
</dbReference>
<dbReference type="InterPro" id="IPR029056">
    <property type="entry name" value="Ribokinase-like"/>
</dbReference>
<dbReference type="NCBIfam" id="NF004398">
    <property type="entry name" value="PRK05756.1"/>
    <property type="match status" value="1"/>
</dbReference>
<dbReference type="NCBIfam" id="TIGR00687">
    <property type="entry name" value="pyridox_kin"/>
    <property type="match status" value="1"/>
</dbReference>
<dbReference type="PANTHER" id="PTHR10534">
    <property type="entry name" value="PYRIDOXAL KINASE"/>
    <property type="match status" value="1"/>
</dbReference>
<dbReference type="PANTHER" id="PTHR10534:SF2">
    <property type="entry name" value="PYRIDOXAL KINASE"/>
    <property type="match status" value="1"/>
</dbReference>
<dbReference type="Pfam" id="PF08543">
    <property type="entry name" value="Phos_pyr_kin"/>
    <property type="match status" value="1"/>
</dbReference>
<dbReference type="SUPFAM" id="SSF53613">
    <property type="entry name" value="Ribokinase-like"/>
    <property type="match status" value="1"/>
</dbReference>
<keyword id="KW-0067">ATP-binding</keyword>
<keyword id="KW-0418">Kinase</keyword>
<keyword id="KW-0460">Magnesium</keyword>
<keyword id="KW-0547">Nucleotide-binding</keyword>
<keyword id="KW-1185">Reference proteome</keyword>
<keyword id="KW-0808">Transferase</keyword>
<feature type="chain" id="PRO_0000269824" description="Pyridoxal kinase PdxY">
    <location>
        <begin position="1"/>
        <end position="288"/>
    </location>
</feature>
<feature type="binding site" evidence="1">
    <location>
        <position position="12"/>
    </location>
    <ligand>
        <name>substrate</name>
    </ligand>
</feature>
<feature type="binding site" evidence="1">
    <location>
        <begin position="47"/>
        <end position="48"/>
    </location>
    <ligand>
        <name>substrate</name>
    </ligand>
</feature>
<feature type="binding site" evidence="1">
    <location>
        <position position="114"/>
    </location>
    <ligand>
        <name>ATP</name>
        <dbReference type="ChEBI" id="CHEBI:30616"/>
    </ligand>
</feature>
<feature type="binding site" evidence="1">
    <location>
        <position position="151"/>
    </location>
    <ligand>
        <name>ATP</name>
        <dbReference type="ChEBI" id="CHEBI:30616"/>
    </ligand>
</feature>
<feature type="binding site" evidence="1">
    <location>
        <position position="184"/>
    </location>
    <ligand>
        <name>ATP</name>
        <dbReference type="ChEBI" id="CHEBI:30616"/>
    </ligand>
</feature>
<feature type="binding site" evidence="1">
    <location>
        <begin position="211"/>
        <end position="214"/>
    </location>
    <ligand>
        <name>ATP</name>
        <dbReference type="ChEBI" id="CHEBI:30616"/>
    </ligand>
</feature>
<feature type="binding site" evidence="1">
    <location>
        <position position="225"/>
    </location>
    <ligand>
        <name>substrate</name>
    </ligand>
</feature>
<reference key="1">
    <citation type="journal article" date="2003" name="Proc. Natl. Acad. Sci. U.S.A.">
        <title>The complete genome sequence of the Arabidopsis and tomato pathogen Pseudomonas syringae pv. tomato DC3000.</title>
        <authorList>
            <person name="Buell C.R."/>
            <person name="Joardar V."/>
            <person name="Lindeberg M."/>
            <person name="Selengut J."/>
            <person name="Paulsen I.T."/>
            <person name="Gwinn M.L."/>
            <person name="Dodson R.J."/>
            <person name="DeBoy R.T."/>
            <person name="Durkin A.S."/>
            <person name="Kolonay J.F."/>
            <person name="Madupu R."/>
            <person name="Daugherty S.C."/>
            <person name="Brinkac L.M."/>
            <person name="Beanan M.J."/>
            <person name="Haft D.H."/>
            <person name="Nelson W.C."/>
            <person name="Davidsen T.M."/>
            <person name="Zafar N."/>
            <person name="Zhou L."/>
            <person name="Liu J."/>
            <person name="Yuan Q."/>
            <person name="Khouri H.M."/>
            <person name="Fedorova N.B."/>
            <person name="Tran B."/>
            <person name="Russell D."/>
            <person name="Berry K.J."/>
            <person name="Utterback T.R."/>
            <person name="Van Aken S.E."/>
            <person name="Feldblyum T.V."/>
            <person name="D'Ascenzo M."/>
            <person name="Deng W.-L."/>
            <person name="Ramos A.R."/>
            <person name="Alfano J.R."/>
            <person name="Cartinhour S."/>
            <person name="Chatterjee A.K."/>
            <person name="Delaney T.P."/>
            <person name="Lazarowitz S.G."/>
            <person name="Martin G.B."/>
            <person name="Schneider D.J."/>
            <person name="Tang X."/>
            <person name="Bender C.L."/>
            <person name="White O."/>
            <person name="Fraser C.M."/>
            <person name="Collmer A."/>
        </authorList>
    </citation>
    <scope>NUCLEOTIDE SEQUENCE [LARGE SCALE GENOMIC DNA]</scope>
    <source>
        <strain>ATCC BAA-871 / DC3000</strain>
    </source>
</reference>
<name>PDXY_PSESM</name>
<evidence type="ECO:0000255" key="1">
    <source>
        <dbReference type="HAMAP-Rule" id="MF_01639"/>
    </source>
</evidence>
<gene>
    <name evidence="1" type="primary">pdxY</name>
    <name type="ordered locus">PSPTO_5521</name>
</gene>
<comment type="function">
    <text evidence="1">Pyridoxal kinase involved in the salvage pathway of pyridoxal 5'-phosphate (PLP). Catalyzes the phosphorylation of pyridoxal to PLP.</text>
</comment>
<comment type="catalytic activity">
    <reaction evidence="1">
        <text>pyridoxal + ATP = pyridoxal 5'-phosphate + ADP + H(+)</text>
        <dbReference type="Rhea" id="RHEA:10224"/>
        <dbReference type="ChEBI" id="CHEBI:15378"/>
        <dbReference type="ChEBI" id="CHEBI:17310"/>
        <dbReference type="ChEBI" id="CHEBI:30616"/>
        <dbReference type="ChEBI" id="CHEBI:456216"/>
        <dbReference type="ChEBI" id="CHEBI:597326"/>
        <dbReference type="EC" id="2.7.1.35"/>
    </reaction>
</comment>
<comment type="cofactor">
    <cofactor evidence="1">
        <name>Mg(2+)</name>
        <dbReference type="ChEBI" id="CHEBI:18420"/>
    </cofactor>
</comment>
<comment type="pathway">
    <text evidence="1">Cofactor metabolism; pyridoxal 5'-phosphate salvage; pyridoxal 5'-phosphate from pyridoxal: step 1/1.</text>
</comment>
<comment type="subunit">
    <text evidence="1">Homodimer.</text>
</comment>
<comment type="similarity">
    <text evidence="1">Belongs to the pyridoxine kinase family. PdxY subfamily.</text>
</comment>
<proteinExistence type="inferred from homology"/>
<protein>
    <recommendedName>
        <fullName evidence="1">Pyridoxal kinase PdxY</fullName>
        <shortName evidence="1">PL kinase</shortName>
        <ecNumber evidence="1">2.7.1.35</ecNumber>
    </recommendedName>
</protein>
<accession>Q87TZ6</accession>
<sequence length="288" mass="31032">MKRTPHLLAIQSHVVFGHAGNSAAVFPMQRIGVNVWPLNTVQFSNHTQYKQWTGEVLAPQQIPALIDGIAAIGELGNCDAVLSGYLGSAAQGRAILSGVARIKAANPKALYLCDPVMGHPEKGCIVPPQVSDFLLEEAAAVADFMCPNQLELDSFSGRKPESLPDCLAMARALLARGPKAIVVKHLDYPGKAADGFEMLLVTAEASWHLRRPLLAFPRQPVGVGDLTSGLFLSRILLGDDLVAAFEFTAAAVHEVLLETQACGSYELELVRAQDRIAHPRVKFEAVRL</sequence>